<gene>
    <name evidence="5" type="primary">TPS-(+)3car1</name>
</gene>
<comment type="function">
    <text evidence="4">Monoterpene synthase (TPS) involved in the biosynthesis of monoterpene natural products included in conifer oleoresin secretions and volatile emissions; these compounds contribute to biotic and abiotic stress defense against herbivores and pathogens (PubMed:23679205). Catalyzes the conversion of (2E)-geranyl diphosphate (GPP) to (+)-3-carene and, to a lower extent, to terpinolene (PubMed:23679205).</text>
</comment>
<comment type="catalytic activity">
    <reaction evidence="4">
        <text>(2E)-geranyl diphosphate = (+)-car-3-ene + diphosphate</text>
        <dbReference type="Rhea" id="RHEA:32539"/>
        <dbReference type="ChEBI" id="CHEBI:7"/>
        <dbReference type="ChEBI" id="CHEBI:33019"/>
        <dbReference type="ChEBI" id="CHEBI:58057"/>
        <dbReference type="EC" id="4.2.3.107"/>
    </reaction>
    <physiologicalReaction direction="left-to-right" evidence="4">
        <dbReference type="Rhea" id="RHEA:32540"/>
    </physiologicalReaction>
</comment>
<comment type="catalytic activity">
    <reaction evidence="4">
        <text>(2E)-geranyl diphosphate = terpinolene + diphosphate</text>
        <dbReference type="Rhea" id="RHEA:25500"/>
        <dbReference type="ChEBI" id="CHEBI:9457"/>
        <dbReference type="ChEBI" id="CHEBI:33019"/>
        <dbReference type="ChEBI" id="CHEBI:58057"/>
        <dbReference type="EC" id="4.2.3.113"/>
    </reaction>
    <physiologicalReaction direction="left-to-right" evidence="4">
        <dbReference type="Rhea" id="RHEA:25501"/>
    </physiologicalReaction>
</comment>
<comment type="cofactor">
    <cofactor evidence="1">
        <name>Mg(2+)</name>
        <dbReference type="ChEBI" id="CHEBI:18420"/>
    </cofactor>
    <cofactor evidence="1">
        <name>Mn(2+)</name>
        <dbReference type="ChEBI" id="CHEBI:29035"/>
    </cofactor>
    <text evidence="1">Binds 3 Mg(2+) or Mn(2+) ions per subunit.</text>
</comment>
<comment type="pathway">
    <text evidence="4">Terpene metabolism; oleoresin biosynthesis.</text>
</comment>
<comment type="pathway">
    <text evidence="4">Secondary metabolite biosynthesis; terpenoid biosynthesis.</text>
</comment>
<comment type="subcellular location">
    <subcellularLocation>
        <location evidence="3">Plastid</location>
        <location evidence="3">Chloroplast</location>
    </subcellularLocation>
</comment>
<comment type="domain">
    <text evidence="6">The Asp-Asp-Xaa-Xaa-Asp/Glu (DDXXD/E) motif is important for the catalytic activity, presumably through binding to Mg(2+).</text>
</comment>
<comment type="similarity">
    <text evidence="6">Belongs to the terpene synthase family. Tpsd subfamily.</text>
</comment>
<organism>
    <name type="scientific">Pinus banksiana</name>
    <name type="common">Jack pine</name>
    <name type="synonym">Pinus divaricata</name>
    <dbReference type="NCBI Taxonomy" id="3353"/>
    <lineage>
        <taxon>Eukaryota</taxon>
        <taxon>Viridiplantae</taxon>
        <taxon>Streptophyta</taxon>
        <taxon>Embryophyta</taxon>
        <taxon>Tracheophyta</taxon>
        <taxon>Spermatophyta</taxon>
        <taxon>Pinopsida</taxon>
        <taxon>Pinidae</taxon>
        <taxon>Conifers I</taxon>
        <taxon>Pinales</taxon>
        <taxon>Pinaceae</taxon>
        <taxon>Pinus</taxon>
        <taxon>Pinus subgen. Pinus</taxon>
    </lineage>
</organism>
<dbReference type="EC" id="4.2.3.107" evidence="4"/>
<dbReference type="EC" id="4.2.3.113" evidence="4"/>
<dbReference type="EMBL" id="JQ240305">
    <property type="protein sequence ID" value="AFU73857.1"/>
    <property type="molecule type" value="mRNA"/>
</dbReference>
<dbReference type="SMR" id="R9QMW4"/>
<dbReference type="UniPathway" id="UPA00213"/>
<dbReference type="UniPathway" id="UPA00924"/>
<dbReference type="GO" id="GO:0009507">
    <property type="term" value="C:chloroplast"/>
    <property type="evidence" value="ECO:0007669"/>
    <property type="project" value="UniProtKB-SubCell"/>
</dbReference>
<dbReference type="GO" id="GO:0000287">
    <property type="term" value="F:magnesium ion binding"/>
    <property type="evidence" value="ECO:0007669"/>
    <property type="project" value="InterPro"/>
</dbReference>
<dbReference type="GO" id="GO:0010333">
    <property type="term" value="F:terpene synthase activity"/>
    <property type="evidence" value="ECO:0000314"/>
    <property type="project" value="UniProtKB"/>
</dbReference>
<dbReference type="GO" id="GO:0016102">
    <property type="term" value="P:diterpenoid biosynthetic process"/>
    <property type="evidence" value="ECO:0007669"/>
    <property type="project" value="InterPro"/>
</dbReference>
<dbReference type="GO" id="GO:0010597">
    <property type="term" value="P:green leaf volatile biosynthetic process"/>
    <property type="evidence" value="ECO:0000314"/>
    <property type="project" value="UniProtKB"/>
</dbReference>
<dbReference type="GO" id="GO:0016114">
    <property type="term" value="P:terpenoid biosynthetic process"/>
    <property type="evidence" value="ECO:0000314"/>
    <property type="project" value="UniProtKB"/>
</dbReference>
<dbReference type="CDD" id="cd00684">
    <property type="entry name" value="Terpene_cyclase_plant_C1"/>
    <property type="match status" value="1"/>
</dbReference>
<dbReference type="FunFam" id="1.50.10.130:FF:000004">
    <property type="entry name" value="Carene synthase, chloroplastic"/>
    <property type="match status" value="1"/>
</dbReference>
<dbReference type="FunFam" id="1.10.600.10:FF:000005">
    <property type="entry name" value="Ent-kaur-16-ene synthase, chloroplastic"/>
    <property type="match status" value="1"/>
</dbReference>
<dbReference type="Gene3D" id="1.10.600.10">
    <property type="entry name" value="Farnesyl Diphosphate Synthase"/>
    <property type="match status" value="1"/>
</dbReference>
<dbReference type="Gene3D" id="1.50.10.130">
    <property type="entry name" value="Terpene synthase, N-terminal domain"/>
    <property type="match status" value="1"/>
</dbReference>
<dbReference type="InterPro" id="IPR008949">
    <property type="entry name" value="Isoprenoid_synthase_dom_sf"/>
</dbReference>
<dbReference type="InterPro" id="IPR034741">
    <property type="entry name" value="Terpene_cyclase-like_1_C"/>
</dbReference>
<dbReference type="InterPro" id="IPR044814">
    <property type="entry name" value="Terpene_cyclase_plant_C1"/>
</dbReference>
<dbReference type="InterPro" id="IPR001906">
    <property type="entry name" value="Terpene_synth_N"/>
</dbReference>
<dbReference type="InterPro" id="IPR036965">
    <property type="entry name" value="Terpene_synth_N_sf"/>
</dbReference>
<dbReference type="InterPro" id="IPR050148">
    <property type="entry name" value="Terpene_synthase-like"/>
</dbReference>
<dbReference type="InterPro" id="IPR005630">
    <property type="entry name" value="Terpene_synthase_metal-bd"/>
</dbReference>
<dbReference type="InterPro" id="IPR008930">
    <property type="entry name" value="Terpenoid_cyclase/PrenylTrfase"/>
</dbReference>
<dbReference type="PANTHER" id="PTHR31225">
    <property type="entry name" value="OS04G0344100 PROTEIN-RELATED"/>
    <property type="match status" value="1"/>
</dbReference>
<dbReference type="Pfam" id="PF01397">
    <property type="entry name" value="Terpene_synth"/>
    <property type="match status" value="1"/>
</dbReference>
<dbReference type="Pfam" id="PF03936">
    <property type="entry name" value="Terpene_synth_C"/>
    <property type="match status" value="1"/>
</dbReference>
<dbReference type="SFLD" id="SFLDS00005">
    <property type="entry name" value="Isoprenoid_Synthase_Type_I"/>
    <property type="match status" value="1"/>
</dbReference>
<dbReference type="SFLD" id="SFLDG01019">
    <property type="entry name" value="Terpene_Cyclase_Like_1_C_Termi"/>
    <property type="match status" value="1"/>
</dbReference>
<dbReference type="SFLD" id="SFLDG01014">
    <property type="entry name" value="Terpene_Cyclase_Like_1_N-term"/>
    <property type="match status" value="1"/>
</dbReference>
<dbReference type="SUPFAM" id="SSF48239">
    <property type="entry name" value="Terpenoid cyclases/Protein prenyltransferases"/>
    <property type="match status" value="1"/>
</dbReference>
<dbReference type="SUPFAM" id="SSF48576">
    <property type="entry name" value="Terpenoid synthases"/>
    <property type="match status" value="1"/>
</dbReference>
<sequence length="626" mass="71190">MSLISAVPLASSCVSKSLISSVREHKALRRAIATLQMSRPGKSVAASTRMSSATAGCDDGVKRRIGDYHSNLWDDNFIQSLSSPYGASSYGDHADRLIGEVKEIFNSFSIADGELTSPVSDLLQQLWMVDNVERLGIDRHFQTEIKVALDNVYRYWSEKGIGCGRDSASTDLNTTALGFRIFRLHGYTVSSDAFEHFKDQMGQFTASANDTELQTRSVFNLFRASLIAFPEEKVLEEAEKFAAAYLKAALQTLPVSGLSREIKYVFDYRWHSNLPRLEARSYIDILADNTISGTPDANTKKLLELAKLEFNIFHSLQQKELQCLWRWWKEWGCPELTFIRHRYVEFYTLVSGIDMVPEHATFRLSFVKTCHLITILDDMYDTFGTIDELRLFTAAVKRWDPSATECLPEYMKGVYMVLYETVNEMAKEAQKSQGRDTLGYVRQALEDYIGSYLKEAEWIATGYVPTFQEYFENGKLSSGHRIATLQPILTLSIPFPHHILQEIDFPSKFNDYACSILRLRGDTRCYKADSARGEEASCTSCYMKENLGSTQEDALNHINGMIEDLIKKLNWEFLRPDNNAPISSKKHAFNISRGLHHFYNYRDGYSVASNETKDLVIKTVLEPVLM</sequence>
<keyword id="KW-0150">Chloroplast</keyword>
<keyword id="KW-0456">Lyase</keyword>
<keyword id="KW-0460">Magnesium</keyword>
<keyword id="KW-0479">Metal-binding</keyword>
<keyword id="KW-0934">Plastid</keyword>
<keyword id="KW-0809">Transit peptide</keyword>
<feature type="transit peptide" description="Chloroplast" evidence="3">
    <location>
        <begin position="1"/>
        <end position="45"/>
    </location>
</feature>
<feature type="chain" id="PRO_0000455011" description="(+)-3-carene synthase 1, chloroplastic">
    <location>
        <begin position="46"/>
        <end position="626"/>
    </location>
</feature>
<feature type="short sequence motif" description="DDXXD motif" evidence="6">
    <location>
        <begin position="377"/>
        <end position="381"/>
    </location>
</feature>
<feature type="binding site" evidence="2">
    <location>
        <position position="377"/>
    </location>
    <ligand>
        <name>Mg(2+)</name>
        <dbReference type="ChEBI" id="CHEBI:18420"/>
        <label>1</label>
    </ligand>
</feature>
<feature type="binding site" evidence="2">
    <location>
        <position position="377"/>
    </location>
    <ligand>
        <name>Mg(2+)</name>
        <dbReference type="ChEBI" id="CHEBI:18420"/>
        <label>2</label>
    </ligand>
</feature>
<feature type="binding site" evidence="2">
    <location>
        <position position="381"/>
    </location>
    <ligand>
        <name>Mg(2+)</name>
        <dbReference type="ChEBI" id="CHEBI:18420"/>
        <label>1</label>
    </ligand>
</feature>
<feature type="binding site" evidence="2">
    <location>
        <position position="381"/>
    </location>
    <ligand>
        <name>Mg(2+)</name>
        <dbReference type="ChEBI" id="CHEBI:18420"/>
        <label>2</label>
    </ligand>
</feature>
<feature type="binding site" evidence="2">
    <location>
        <position position="529"/>
    </location>
    <ligand>
        <name>Mg(2+)</name>
        <dbReference type="ChEBI" id="CHEBI:18420"/>
        <label>3</label>
    </ligand>
</feature>
<proteinExistence type="evidence at protein level"/>
<name>3CAR1_PINBN</name>
<accession>R9QMW4</accession>
<reference key="1">
    <citation type="journal article" date="2013" name="BMC Plant Biol.">
        <title>Transcriptome resources and functional characterization of monoterpene synthases for two host species of the mountain pine beetle, lodgepole pine (Pinus contorta) and jack pine (Pinus banksiana).</title>
        <authorList>
            <person name="Hall D.E."/>
            <person name="Yuen M.M.S."/>
            <person name="Jancsik S."/>
            <person name="Quesada A.L."/>
            <person name="Dullat H.K."/>
            <person name="Li M."/>
            <person name="Henderson H."/>
            <person name="Arango-Velez A."/>
            <person name="Liao N.Y."/>
            <person name="Docking R.T."/>
            <person name="Chan S.K."/>
            <person name="Cooke J.E.K."/>
            <person name="Breuil C."/>
            <person name="Jones S.J.M."/>
            <person name="Keeling C.I."/>
            <person name="Bohlmann J."/>
        </authorList>
    </citation>
    <scope>NUCLEOTIDE SEQUENCE [MRNA]</scope>
    <scope>FUNCTION</scope>
    <scope>CATALYTIC ACTIVITY</scope>
    <scope>PATHWAY</scope>
</reference>
<protein>
    <recommendedName>
        <fullName evidence="5">(+)-3-carene synthase 1, chloroplastic</fullName>
        <ecNumber evidence="4">4.2.3.107</ecNumber>
    </recommendedName>
    <alternativeName>
        <fullName evidence="5">Terpene synthase (+)3car1</fullName>
        <shortName evidence="5">PbTPS-(+)3car1</shortName>
    </alternativeName>
    <alternativeName>
        <fullName evidence="5">Terpinolene synthase (+)3car1, chloroplastic</fullName>
        <ecNumber evidence="4">4.2.3.113</ecNumber>
    </alternativeName>
</protein>
<evidence type="ECO:0000250" key="1">
    <source>
        <dbReference type="UniProtKB" id="A0A1C9J6A7"/>
    </source>
</evidence>
<evidence type="ECO:0000250" key="2">
    <source>
        <dbReference type="UniProtKB" id="Q40577"/>
    </source>
</evidence>
<evidence type="ECO:0000255" key="3"/>
<evidence type="ECO:0000269" key="4">
    <source>
    </source>
</evidence>
<evidence type="ECO:0000303" key="5">
    <source>
    </source>
</evidence>
<evidence type="ECO:0000305" key="6"/>